<sequence>MAVTYQTEGVKMPDIKKRETTEWIKNVAASYGKRLGEIAYIFCSDEKILEVNRQYLQHDYYTDIITFDYCQGDRLSGDLFISLDTIRTNAEQFGAAYDDELHRVIIHGILHLCGINDKGPGEREIMEEAENKALAMR</sequence>
<name>YBEY_BACTN</name>
<proteinExistence type="inferred from homology"/>
<organism>
    <name type="scientific">Bacteroides thetaiotaomicron (strain ATCC 29148 / DSM 2079 / JCM 5827 / CCUG 10774 / NCTC 10582 / VPI-5482 / E50)</name>
    <dbReference type="NCBI Taxonomy" id="226186"/>
    <lineage>
        <taxon>Bacteria</taxon>
        <taxon>Pseudomonadati</taxon>
        <taxon>Bacteroidota</taxon>
        <taxon>Bacteroidia</taxon>
        <taxon>Bacteroidales</taxon>
        <taxon>Bacteroidaceae</taxon>
        <taxon>Bacteroides</taxon>
    </lineage>
</organism>
<dbReference type="EC" id="3.1.-.-" evidence="1"/>
<dbReference type="EMBL" id="AE015928">
    <property type="protein sequence ID" value="AAO78389.1"/>
    <property type="molecule type" value="Genomic_DNA"/>
</dbReference>
<dbReference type="RefSeq" id="NP_812195.1">
    <property type="nucleotide sequence ID" value="NC_004663.1"/>
</dbReference>
<dbReference type="RefSeq" id="WP_011108739.1">
    <property type="nucleotide sequence ID" value="NC_004663.1"/>
</dbReference>
<dbReference type="SMR" id="Q8A2M2"/>
<dbReference type="STRING" id="226186.BT_3283"/>
<dbReference type="PaxDb" id="226186-BT_3283"/>
<dbReference type="EnsemblBacteria" id="AAO78389">
    <property type="protein sequence ID" value="AAO78389"/>
    <property type="gene ID" value="BT_3283"/>
</dbReference>
<dbReference type="GeneID" id="60924463"/>
<dbReference type="KEGG" id="bth:BT_3283"/>
<dbReference type="PATRIC" id="fig|226186.12.peg.3349"/>
<dbReference type="eggNOG" id="COG0319">
    <property type="taxonomic scope" value="Bacteria"/>
</dbReference>
<dbReference type="HOGENOM" id="CLU_106710_3_3_10"/>
<dbReference type="InParanoid" id="Q8A2M2"/>
<dbReference type="OrthoDB" id="9811984at2"/>
<dbReference type="Proteomes" id="UP000001414">
    <property type="component" value="Chromosome"/>
</dbReference>
<dbReference type="GO" id="GO:0005737">
    <property type="term" value="C:cytoplasm"/>
    <property type="evidence" value="ECO:0007669"/>
    <property type="project" value="UniProtKB-SubCell"/>
</dbReference>
<dbReference type="GO" id="GO:0004222">
    <property type="term" value="F:metalloendopeptidase activity"/>
    <property type="evidence" value="ECO:0007669"/>
    <property type="project" value="InterPro"/>
</dbReference>
<dbReference type="GO" id="GO:0004521">
    <property type="term" value="F:RNA endonuclease activity"/>
    <property type="evidence" value="ECO:0007669"/>
    <property type="project" value="UniProtKB-UniRule"/>
</dbReference>
<dbReference type="GO" id="GO:0008270">
    <property type="term" value="F:zinc ion binding"/>
    <property type="evidence" value="ECO:0007669"/>
    <property type="project" value="UniProtKB-UniRule"/>
</dbReference>
<dbReference type="GO" id="GO:0006364">
    <property type="term" value="P:rRNA processing"/>
    <property type="evidence" value="ECO:0007669"/>
    <property type="project" value="UniProtKB-UniRule"/>
</dbReference>
<dbReference type="Gene3D" id="3.40.390.30">
    <property type="entry name" value="Metalloproteases ('zincins'), catalytic domain"/>
    <property type="match status" value="1"/>
</dbReference>
<dbReference type="HAMAP" id="MF_00009">
    <property type="entry name" value="Endoribonucl_YbeY"/>
    <property type="match status" value="1"/>
</dbReference>
<dbReference type="InterPro" id="IPR023091">
    <property type="entry name" value="MetalPrtase_cat_dom_sf_prd"/>
</dbReference>
<dbReference type="InterPro" id="IPR002036">
    <property type="entry name" value="YbeY"/>
</dbReference>
<dbReference type="NCBIfam" id="TIGR00043">
    <property type="entry name" value="rRNA maturation RNase YbeY"/>
    <property type="match status" value="1"/>
</dbReference>
<dbReference type="PANTHER" id="PTHR46986">
    <property type="entry name" value="ENDORIBONUCLEASE YBEY, CHLOROPLASTIC"/>
    <property type="match status" value="1"/>
</dbReference>
<dbReference type="PANTHER" id="PTHR46986:SF1">
    <property type="entry name" value="ENDORIBONUCLEASE YBEY, CHLOROPLASTIC"/>
    <property type="match status" value="1"/>
</dbReference>
<dbReference type="Pfam" id="PF02130">
    <property type="entry name" value="YbeY"/>
    <property type="match status" value="1"/>
</dbReference>
<dbReference type="SUPFAM" id="SSF55486">
    <property type="entry name" value="Metalloproteases ('zincins'), catalytic domain"/>
    <property type="match status" value="1"/>
</dbReference>
<accession>Q8A2M2</accession>
<gene>
    <name evidence="1" type="primary">ybeY</name>
    <name type="ordered locus">BT_3283</name>
</gene>
<reference key="1">
    <citation type="journal article" date="2003" name="Science">
        <title>A genomic view of the human-Bacteroides thetaiotaomicron symbiosis.</title>
        <authorList>
            <person name="Xu J."/>
            <person name="Bjursell M.K."/>
            <person name="Himrod J."/>
            <person name="Deng S."/>
            <person name="Carmichael L.K."/>
            <person name="Chiang H.C."/>
            <person name="Hooper L.V."/>
            <person name="Gordon J.I."/>
        </authorList>
    </citation>
    <scope>NUCLEOTIDE SEQUENCE [LARGE SCALE GENOMIC DNA]</scope>
    <source>
        <strain>ATCC 29148 / DSM 2079 / JCM 5827 / CCUG 10774 / NCTC 10582 / VPI-5482 / E50</strain>
    </source>
</reference>
<evidence type="ECO:0000255" key="1">
    <source>
        <dbReference type="HAMAP-Rule" id="MF_00009"/>
    </source>
</evidence>
<feature type="chain" id="PRO_0000102412" description="Endoribonuclease YbeY">
    <location>
        <begin position="1"/>
        <end position="137"/>
    </location>
</feature>
<feature type="binding site" evidence="1">
    <location>
        <position position="107"/>
    </location>
    <ligand>
        <name>Zn(2+)</name>
        <dbReference type="ChEBI" id="CHEBI:29105"/>
        <note>catalytic</note>
    </ligand>
</feature>
<feature type="binding site" evidence="1">
    <location>
        <position position="111"/>
    </location>
    <ligand>
        <name>Zn(2+)</name>
        <dbReference type="ChEBI" id="CHEBI:29105"/>
        <note>catalytic</note>
    </ligand>
</feature>
<feature type="binding site" evidence="1">
    <location>
        <position position="117"/>
    </location>
    <ligand>
        <name>Zn(2+)</name>
        <dbReference type="ChEBI" id="CHEBI:29105"/>
        <note>catalytic</note>
    </ligand>
</feature>
<comment type="function">
    <text evidence="1">Single strand-specific metallo-endoribonuclease involved in late-stage 70S ribosome quality control and in maturation of the 3' terminus of the 16S rRNA.</text>
</comment>
<comment type="cofactor">
    <cofactor evidence="1">
        <name>Zn(2+)</name>
        <dbReference type="ChEBI" id="CHEBI:29105"/>
    </cofactor>
    <text evidence="1">Binds 1 zinc ion.</text>
</comment>
<comment type="subcellular location">
    <subcellularLocation>
        <location evidence="1">Cytoplasm</location>
    </subcellularLocation>
</comment>
<comment type="similarity">
    <text evidence="1">Belongs to the endoribonuclease YbeY family.</text>
</comment>
<protein>
    <recommendedName>
        <fullName evidence="1">Endoribonuclease YbeY</fullName>
        <ecNumber evidence="1">3.1.-.-</ecNumber>
    </recommendedName>
</protein>
<keyword id="KW-0963">Cytoplasm</keyword>
<keyword id="KW-0255">Endonuclease</keyword>
<keyword id="KW-0378">Hydrolase</keyword>
<keyword id="KW-0479">Metal-binding</keyword>
<keyword id="KW-0540">Nuclease</keyword>
<keyword id="KW-1185">Reference proteome</keyword>
<keyword id="KW-0690">Ribosome biogenesis</keyword>
<keyword id="KW-0698">rRNA processing</keyword>
<keyword id="KW-0862">Zinc</keyword>